<reference key="1">
    <citation type="submission" date="2006-08" db="EMBL/GenBank/DDBJ databases">
        <title>Complete sequence of Shewanella sp. MR-4.</title>
        <authorList>
            <consortium name="US DOE Joint Genome Institute"/>
            <person name="Copeland A."/>
            <person name="Lucas S."/>
            <person name="Lapidus A."/>
            <person name="Barry K."/>
            <person name="Detter J.C."/>
            <person name="Glavina del Rio T."/>
            <person name="Hammon N."/>
            <person name="Israni S."/>
            <person name="Dalin E."/>
            <person name="Tice H."/>
            <person name="Pitluck S."/>
            <person name="Kiss H."/>
            <person name="Brettin T."/>
            <person name="Bruce D."/>
            <person name="Han C."/>
            <person name="Tapia R."/>
            <person name="Gilna P."/>
            <person name="Schmutz J."/>
            <person name="Larimer F."/>
            <person name="Land M."/>
            <person name="Hauser L."/>
            <person name="Kyrpides N."/>
            <person name="Mikhailova N."/>
            <person name="Nealson K."/>
            <person name="Konstantinidis K."/>
            <person name="Klappenbach J."/>
            <person name="Tiedje J."/>
            <person name="Richardson P."/>
        </authorList>
    </citation>
    <scope>NUCLEOTIDE SEQUENCE [LARGE SCALE GENOMIC DNA]</scope>
    <source>
        <strain>MR-4</strain>
    </source>
</reference>
<feature type="chain" id="PRO_1000043067" description="Anthranilate phosphoribosyltransferase">
    <location>
        <begin position="1"/>
        <end position="347"/>
    </location>
</feature>
<feature type="binding site" evidence="1">
    <location>
        <position position="88"/>
    </location>
    <ligand>
        <name>5-phospho-alpha-D-ribose 1-diphosphate</name>
        <dbReference type="ChEBI" id="CHEBI:58017"/>
    </ligand>
</feature>
<feature type="binding site" evidence="1">
    <location>
        <position position="88"/>
    </location>
    <ligand>
        <name>anthranilate</name>
        <dbReference type="ChEBI" id="CHEBI:16567"/>
        <label>1</label>
    </ligand>
</feature>
<feature type="binding site" evidence="1">
    <location>
        <begin position="91"/>
        <end position="92"/>
    </location>
    <ligand>
        <name>5-phospho-alpha-D-ribose 1-diphosphate</name>
        <dbReference type="ChEBI" id="CHEBI:58017"/>
    </ligand>
</feature>
<feature type="binding site" evidence="1">
    <location>
        <position position="96"/>
    </location>
    <ligand>
        <name>5-phospho-alpha-D-ribose 1-diphosphate</name>
        <dbReference type="ChEBI" id="CHEBI:58017"/>
    </ligand>
</feature>
<feature type="binding site" evidence="1">
    <location>
        <begin position="98"/>
        <end position="101"/>
    </location>
    <ligand>
        <name>5-phospho-alpha-D-ribose 1-diphosphate</name>
        <dbReference type="ChEBI" id="CHEBI:58017"/>
    </ligand>
</feature>
<feature type="binding site" evidence="1">
    <location>
        <position position="100"/>
    </location>
    <ligand>
        <name>Mg(2+)</name>
        <dbReference type="ChEBI" id="CHEBI:18420"/>
        <label>1</label>
    </ligand>
</feature>
<feature type="binding site" evidence="1">
    <location>
        <begin position="116"/>
        <end position="124"/>
    </location>
    <ligand>
        <name>5-phospho-alpha-D-ribose 1-diphosphate</name>
        <dbReference type="ChEBI" id="CHEBI:58017"/>
    </ligand>
</feature>
<feature type="binding site" evidence="1">
    <location>
        <position position="119"/>
    </location>
    <ligand>
        <name>anthranilate</name>
        <dbReference type="ChEBI" id="CHEBI:16567"/>
        <label>1</label>
    </ligand>
</feature>
<feature type="binding site" evidence="1">
    <location>
        <position position="128"/>
    </location>
    <ligand>
        <name>5-phospho-alpha-D-ribose 1-diphosphate</name>
        <dbReference type="ChEBI" id="CHEBI:58017"/>
    </ligand>
</feature>
<feature type="binding site" evidence="1">
    <location>
        <position position="174"/>
    </location>
    <ligand>
        <name>anthranilate</name>
        <dbReference type="ChEBI" id="CHEBI:16567"/>
        <label>2</label>
    </ligand>
</feature>
<feature type="binding site" evidence="1">
    <location>
        <position position="232"/>
    </location>
    <ligand>
        <name>Mg(2+)</name>
        <dbReference type="ChEBI" id="CHEBI:18420"/>
        <label>2</label>
    </ligand>
</feature>
<feature type="binding site" evidence="1">
    <location>
        <position position="233"/>
    </location>
    <ligand>
        <name>Mg(2+)</name>
        <dbReference type="ChEBI" id="CHEBI:18420"/>
        <label>1</label>
    </ligand>
</feature>
<feature type="binding site" evidence="1">
    <location>
        <position position="233"/>
    </location>
    <ligand>
        <name>Mg(2+)</name>
        <dbReference type="ChEBI" id="CHEBI:18420"/>
        <label>2</label>
    </ligand>
</feature>
<sequence>MSATSIQPLLDILFQGKALTREQTASLFSTLIQGEMNEAVMAGMLMALKIRGETIAEISGAADAMRAAAKPFPYPSSMRTEGIIDIVGTGGDGFNTINISTTAAFVAAAAGAKVAKHGNRSVSSKSGSSDLLAQFGIDLTMSPELASRCLESLNLCFLFAPHYHGGVKHAVPVRQALKTRTIFNVLGPLINPARPEFMLLGVYSPELVTPIARVLQALGTQRAMVVHGSGLDEVALHGSTQVAELKDGEIIEYQLTPADFGVPQAQMSELEGGEPAQNAQITQSILQGQGSDAHTHAVAINAGCALYLCGLSDSVKAGTALALNTIKSGKAFELLNQLAKVSSEAQE</sequence>
<dbReference type="EC" id="2.4.2.18" evidence="1"/>
<dbReference type="EMBL" id="CP000446">
    <property type="protein sequence ID" value="ABI38538.1"/>
    <property type="molecule type" value="Genomic_DNA"/>
</dbReference>
<dbReference type="RefSeq" id="WP_011622242.1">
    <property type="nucleotide sequence ID" value="NC_008321.1"/>
</dbReference>
<dbReference type="SMR" id="Q0HK79"/>
<dbReference type="KEGG" id="she:Shewmr4_1460"/>
<dbReference type="HOGENOM" id="CLU_034315_2_1_6"/>
<dbReference type="UniPathway" id="UPA00035">
    <property type="reaction ID" value="UER00041"/>
</dbReference>
<dbReference type="GO" id="GO:0005829">
    <property type="term" value="C:cytosol"/>
    <property type="evidence" value="ECO:0007669"/>
    <property type="project" value="TreeGrafter"/>
</dbReference>
<dbReference type="GO" id="GO:0004048">
    <property type="term" value="F:anthranilate phosphoribosyltransferase activity"/>
    <property type="evidence" value="ECO:0007669"/>
    <property type="project" value="UniProtKB-UniRule"/>
</dbReference>
<dbReference type="GO" id="GO:0000287">
    <property type="term" value="F:magnesium ion binding"/>
    <property type="evidence" value="ECO:0007669"/>
    <property type="project" value="UniProtKB-UniRule"/>
</dbReference>
<dbReference type="GO" id="GO:0000162">
    <property type="term" value="P:L-tryptophan biosynthetic process"/>
    <property type="evidence" value="ECO:0007669"/>
    <property type="project" value="UniProtKB-UniRule"/>
</dbReference>
<dbReference type="FunFam" id="3.40.1030.10:FF:000002">
    <property type="entry name" value="Anthranilate phosphoribosyltransferase"/>
    <property type="match status" value="1"/>
</dbReference>
<dbReference type="Gene3D" id="3.40.1030.10">
    <property type="entry name" value="Nucleoside phosphorylase/phosphoribosyltransferase catalytic domain"/>
    <property type="match status" value="1"/>
</dbReference>
<dbReference type="Gene3D" id="1.20.970.10">
    <property type="entry name" value="Transferase, Pyrimidine Nucleoside Phosphorylase, Chain C"/>
    <property type="match status" value="1"/>
</dbReference>
<dbReference type="HAMAP" id="MF_00211">
    <property type="entry name" value="TrpD"/>
    <property type="match status" value="1"/>
</dbReference>
<dbReference type="InterPro" id="IPR005940">
    <property type="entry name" value="Anthranilate_Pribosyl_Tfrase"/>
</dbReference>
<dbReference type="InterPro" id="IPR000312">
    <property type="entry name" value="Glycosyl_Trfase_fam3"/>
</dbReference>
<dbReference type="InterPro" id="IPR017459">
    <property type="entry name" value="Glycosyl_Trfase_fam3_N_dom"/>
</dbReference>
<dbReference type="InterPro" id="IPR036320">
    <property type="entry name" value="Glycosyl_Trfase_fam3_N_dom_sf"/>
</dbReference>
<dbReference type="InterPro" id="IPR035902">
    <property type="entry name" value="Nuc_phospho_transferase"/>
</dbReference>
<dbReference type="NCBIfam" id="TIGR01245">
    <property type="entry name" value="trpD"/>
    <property type="match status" value="1"/>
</dbReference>
<dbReference type="PANTHER" id="PTHR43285">
    <property type="entry name" value="ANTHRANILATE PHOSPHORIBOSYLTRANSFERASE"/>
    <property type="match status" value="1"/>
</dbReference>
<dbReference type="PANTHER" id="PTHR43285:SF2">
    <property type="entry name" value="ANTHRANILATE PHOSPHORIBOSYLTRANSFERASE"/>
    <property type="match status" value="1"/>
</dbReference>
<dbReference type="Pfam" id="PF02885">
    <property type="entry name" value="Glycos_trans_3N"/>
    <property type="match status" value="1"/>
</dbReference>
<dbReference type="Pfam" id="PF00591">
    <property type="entry name" value="Glycos_transf_3"/>
    <property type="match status" value="1"/>
</dbReference>
<dbReference type="SUPFAM" id="SSF52418">
    <property type="entry name" value="Nucleoside phosphorylase/phosphoribosyltransferase catalytic domain"/>
    <property type="match status" value="1"/>
</dbReference>
<dbReference type="SUPFAM" id="SSF47648">
    <property type="entry name" value="Nucleoside phosphorylase/phosphoribosyltransferase N-terminal domain"/>
    <property type="match status" value="1"/>
</dbReference>
<protein>
    <recommendedName>
        <fullName evidence="1">Anthranilate phosphoribosyltransferase</fullName>
        <ecNumber evidence="1">2.4.2.18</ecNumber>
    </recommendedName>
</protein>
<proteinExistence type="inferred from homology"/>
<keyword id="KW-0028">Amino-acid biosynthesis</keyword>
<keyword id="KW-0057">Aromatic amino acid biosynthesis</keyword>
<keyword id="KW-0328">Glycosyltransferase</keyword>
<keyword id="KW-0460">Magnesium</keyword>
<keyword id="KW-0479">Metal-binding</keyword>
<keyword id="KW-0808">Transferase</keyword>
<keyword id="KW-0822">Tryptophan biosynthesis</keyword>
<gene>
    <name evidence="1" type="primary">trpD</name>
    <name type="ordered locus">Shewmr4_1460</name>
</gene>
<comment type="function">
    <text evidence="1">Catalyzes the transfer of the phosphoribosyl group of 5-phosphorylribose-1-pyrophosphate (PRPP) to anthranilate to yield N-(5'-phosphoribosyl)-anthranilate (PRA).</text>
</comment>
<comment type="catalytic activity">
    <reaction evidence="1">
        <text>N-(5-phospho-beta-D-ribosyl)anthranilate + diphosphate = 5-phospho-alpha-D-ribose 1-diphosphate + anthranilate</text>
        <dbReference type="Rhea" id="RHEA:11768"/>
        <dbReference type="ChEBI" id="CHEBI:16567"/>
        <dbReference type="ChEBI" id="CHEBI:18277"/>
        <dbReference type="ChEBI" id="CHEBI:33019"/>
        <dbReference type="ChEBI" id="CHEBI:58017"/>
        <dbReference type="EC" id="2.4.2.18"/>
    </reaction>
</comment>
<comment type="cofactor">
    <cofactor evidence="1">
        <name>Mg(2+)</name>
        <dbReference type="ChEBI" id="CHEBI:18420"/>
    </cofactor>
    <text evidence="1">Binds 2 magnesium ions per monomer.</text>
</comment>
<comment type="pathway">
    <text evidence="1">Amino-acid biosynthesis; L-tryptophan biosynthesis; L-tryptophan from chorismate: step 2/5.</text>
</comment>
<comment type="subunit">
    <text evidence="1">Homodimer.</text>
</comment>
<comment type="similarity">
    <text evidence="1">Belongs to the anthranilate phosphoribosyltransferase family.</text>
</comment>
<accession>Q0HK79</accession>
<evidence type="ECO:0000255" key="1">
    <source>
        <dbReference type="HAMAP-Rule" id="MF_00211"/>
    </source>
</evidence>
<name>TRPD_SHESM</name>
<organism>
    <name type="scientific">Shewanella sp. (strain MR-4)</name>
    <dbReference type="NCBI Taxonomy" id="60480"/>
    <lineage>
        <taxon>Bacteria</taxon>
        <taxon>Pseudomonadati</taxon>
        <taxon>Pseudomonadota</taxon>
        <taxon>Gammaproteobacteria</taxon>
        <taxon>Alteromonadales</taxon>
        <taxon>Shewanellaceae</taxon>
        <taxon>Shewanella</taxon>
    </lineage>
</organism>